<comment type="subcellular location">
    <subcellularLocation>
        <location evidence="1">Cytoplasm</location>
    </subcellularLocation>
    <subcellularLocation>
        <location evidence="1">Nucleus</location>
    </subcellularLocation>
</comment>
<comment type="similarity">
    <text evidence="2">Belongs to the WHI2 family.</text>
</comment>
<accession>Q9P7D3</accession>
<sequence length="295" mass="33766">MSVITQAQEIPTVAANPDFNYEGDPIIIQLCDRDTVFELSRDQLLGLPESILMCLFPRGLLLDYEIQECQLTQRPLIFQTADFDPSLLQYILNYFQMAENRTANDEIALSPPPPSFPGKCGIILLKEDIEFFILPPISPTTNIAIEVSPNDLLKLKQRVAQRLLQQKKIFDCLHLENSTSEGSAEKNLVRMLCYSGFHEDDEWKRRIQEPHRACITSVTLTNLDFSADQGPVSDPEYFPVYHKLLLFWQKPARKCWWDSSTSITYNGIEFATWVRRVWTLELAVLGANTYETAAV</sequence>
<keyword id="KW-0963">Cytoplasm</keyword>
<keyword id="KW-0539">Nucleus</keyword>
<keyword id="KW-1185">Reference proteome</keyword>
<reference evidence="3" key="1">
    <citation type="journal article" date="2002" name="Nature">
        <title>The genome sequence of Schizosaccharomyces pombe.</title>
        <authorList>
            <person name="Wood V."/>
            <person name="Gwilliam R."/>
            <person name="Rajandream M.A."/>
            <person name="Lyne M.H."/>
            <person name="Lyne R."/>
            <person name="Stewart A."/>
            <person name="Sgouros J.G."/>
            <person name="Peat N."/>
            <person name="Hayles J."/>
            <person name="Baker S.G."/>
            <person name="Basham D."/>
            <person name="Bowman S."/>
            <person name="Brooks K."/>
            <person name="Brown D."/>
            <person name="Brown S."/>
            <person name="Chillingworth T."/>
            <person name="Churcher C.M."/>
            <person name="Collins M."/>
            <person name="Connor R."/>
            <person name="Cronin A."/>
            <person name="Davis P."/>
            <person name="Feltwell T."/>
            <person name="Fraser A."/>
            <person name="Gentles S."/>
            <person name="Goble A."/>
            <person name="Hamlin N."/>
            <person name="Harris D.E."/>
            <person name="Hidalgo J."/>
            <person name="Hodgson G."/>
            <person name="Holroyd S."/>
            <person name="Hornsby T."/>
            <person name="Howarth S."/>
            <person name="Huckle E.J."/>
            <person name="Hunt S."/>
            <person name="Jagels K."/>
            <person name="James K.D."/>
            <person name="Jones L."/>
            <person name="Jones M."/>
            <person name="Leather S."/>
            <person name="McDonald S."/>
            <person name="McLean J."/>
            <person name="Mooney P."/>
            <person name="Moule S."/>
            <person name="Mungall K.L."/>
            <person name="Murphy L.D."/>
            <person name="Niblett D."/>
            <person name="Odell C."/>
            <person name="Oliver K."/>
            <person name="O'Neil S."/>
            <person name="Pearson D."/>
            <person name="Quail M.A."/>
            <person name="Rabbinowitsch E."/>
            <person name="Rutherford K.M."/>
            <person name="Rutter S."/>
            <person name="Saunders D."/>
            <person name="Seeger K."/>
            <person name="Sharp S."/>
            <person name="Skelton J."/>
            <person name="Simmonds M.N."/>
            <person name="Squares R."/>
            <person name="Squares S."/>
            <person name="Stevens K."/>
            <person name="Taylor K."/>
            <person name="Taylor R.G."/>
            <person name="Tivey A."/>
            <person name="Walsh S.V."/>
            <person name="Warren T."/>
            <person name="Whitehead S."/>
            <person name="Woodward J.R."/>
            <person name="Volckaert G."/>
            <person name="Aert R."/>
            <person name="Robben J."/>
            <person name="Grymonprez B."/>
            <person name="Weltjens I."/>
            <person name="Vanstreels E."/>
            <person name="Rieger M."/>
            <person name="Schaefer M."/>
            <person name="Mueller-Auer S."/>
            <person name="Gabel C."/>
            <person name="Fuchs M."/>
            <person name="Duesterhoeft A."/>
            <person name="Fritzc C."/>
            <person name="Holzer E."/>
            <person name="Moestl D."/>
            <person name="Hilbert H."/>
            <person name="Borzym K."/>
            <person name="Langer I."/>
            <person name="Beck A."/>
            <person name="Lehrach H."/>
            <person name="Reinhardt R."/>
            <person name="Pohl T.M."/>
            <person name="Eger P."/>
            <person name="Zimmermann W."/>
            <person name="Wedler H."/>
            <person name="Wambutt R."/>
            <person name="Purnelle B."/>
            <person name="Goffeau A."/>
            <person name="Cadieu E."/>
            <person name="Dreano S."/>
            <person name="Gloux S."/>
            <person name="Lelaure V."/>
            <person name="Mottier S."/>
            <person name="Galibert F."/>
            <person name="Aves S.J."/>
            <person name="Xiang Z."/>
            <person name="Hunt C."/>
            <person name="Moore K."/>
            <person name="Hurst S.M."/>
            <person name="Lucas M."/>
            <person name="Rochet M."/>
            <person name="Gaillardin C."/>
            <person name="Tallada V.A."/>
            <person name="Garzon A."/>
            <person name="Thode G."/>
            <person name="Daga R.R."/>
            <person name="Cruzado L."/>
            <person name="Jimenez J."/>
            <person name="Sanchez M."/>
            <person name="del Rey F."/>
            <person name="Benito J."/>
            <person name="Dominguez A."/>
            <person name="Revuelta J.L."/>
            <person name="Moreno S."/>
            <person name="Armstrong J."/>
            <person name="Forsburg S.L."/>
            <person name="Cerutti L."/>
            <person name="Lowe T."/>
            <person name="McCombie W.R."/>
            <person name="Paulsen I."/>
            <person name="Potashkin J."/>
            <person name="Shpakovski G.V."/>
            <person name="Ussery D."/>
            <person name="Barrell B.G."/>
            <person name="Nurse P."/>
        </authorList>
    </citation>
    <scope>NUCLEOTIDE SEQUENCE [LARGE SCALE GENOMIC DNA]</scope>
    <source>
        <strain>972 / ATCC 24843</strain>
    </source>
</reference>
<reference evidence="2" key="2">
    <citation type="journal article" date="2006" name="Nat. Biotechnol.">
        <title>ORFeome cloning and global analysis of protein localization in the fission yeast Schizosaccharomyces pombe.</title>
        <authorList>
            <person name="Matsuyama A."/>
            <person name="Arai R."/>
            <person name="Yashiroda Y."/>
            <person name="Shirai A."/>
            <person name="Kamata A."/>
            <person name="Sekido S."/>
            <person name="Kobayashi Y."/>
            <person name="Hashimoto A."/>
            <person name="Hamamoto M."/>
            <person name="Hiraoka Y."/>
            <person name="Horinouchi S."/>
            <person name="Yoshida M."/>
        </authorList>
    </citation>
    <scope>SUBCELLULAR LOCATION [LARGE SCALE ANALYSIS]</scope>
</reference>
<feature type="chain" id="PRO_0000363357" description="WHI2-like protein P4H10.16c">
    <location>
        <begin position="1"/>
        <end position="295"/>
    </location>
</feature>
<name>YOFG_SCHPO</name>
<organism>
    <name type="scientific">Schizosaccharomyces pombe (strain 972 / ATCC 24843)</name>
    <name type="common">Fission yeast</name>
    <dbReference type="NCBI Taxonomy" id="284812"/>
    <lineage>
        <taxon>Eukaryota</taxon>
        <taxon>Fungi</taxon>
        <taxon>Dikarya</taxon>
        <taxon>Ascomycota</taxon>
        <taxon>Taphrinomycotina</taxon>
        <taxon>Schizosaccharomycetes</taxon>
        <taxon>Schizosaccharomycetales</taxon>
        <taxon>Schizosaccharomycetaceae</taxon>
        <taxon>Schizosaccharomyces</taxon>
    </lineage>
</organism>
<gene>
    <name type="ORF">SPBP4H10.16c</name>
</gene>
<evidence type="ECO:0000269" key="1">
    <source>
    </source>
</evidence>
<evidence type="ECO:0000305" key="2"/>
<evidence type="ECO:0000312" key="3">
    <source>
        <dbReference type="EMBL" id="CAB83174.1"/>
    </source>
</evidence>
<proteinExistence type="inferred from homology"/>
<protein>
    <recommendedName>
        <fullName>WHI2-like protein P4H10.16c</fullName>
    </recommendedName>
</protein>
<dbReference type="EMBL" id="CU329671">
    <property type="protein sequence ID" value="CAB83174.1"/>
    <property type="molecule type" value="Genomic_DNA"/>
</dbReference>
<dbReference type="RefSeq" id="NP_596190.1">
    <property type="nucleotide sequence ID" value="NM_001022109.2"/>
</dbReference>
<dbReference type="BioGRID" id="277869">
    <property type="interactions" value="48"/>
</dbReference>
<dbReference type="FunCoup" id="Q9P7D3">
    <property type="interactions" value="236"/>
</dbReference>
<dbReference type="STRING" id="284812.Q9P7D3"/>
<dbReference type="PaxDb" id="4896-SPBP4H10.16c.1"/>
<dbReference type="EnsemblFungi" id="SPBP4H10.16c.1">
    <property type="protein sequence ID" value="SPBP4H10.16c.1:pep"/>
    <property type="gene ID" value="SPBP4H10.16c"/>
</dbReference>
<dbReference type="KEGG" id="spo:2541358"/>
<dbReference type="PomBase" id="SPBP4H10.16c"/>
<dbReference type="VEuPathDB" id="FungiDB:SPBP4H10.16c"/>
<dbReference type="eggNOG" id="ENOG502RXS0">
    <property type="taxonomic scope" value="Eukaryota"/>
</dbReference>
<dbReference type="HOGENOM" id="CLU_028899_0_0_1"/>
<dbReference type="InParanoid" id="Q9P7D3"/>
<dbReference type="OMA" id="HKLLLFW"/>
<dbReference type="PhylomeDB" id="Q9P7D3"/>
<dbReference type="PRO" id="PR:Q9P7D3"/>
<dbReference type="Proteomes" id="UP000002485">
    <property type="component" value="Chromosome II"/>
</dbReference>
<dbReference type="GO" id="GO:0071013">
    <property type="term" value="C:catalytic step 2 spliceosome"/>
    <property type="evidence" value="ECO:0000250"/>
    <property type="project" value="PomBase"/>
</dbReference>
<dbReference type="GO" id="GO:0005829">
    <property type="term" value="C:cytosol"/>
    <property type="evidence" value="ECO:0007005"/>
    <property type="project" value="PomBase"/>
</dbReference>
<dbReference type="GO" id="GO:0005634">
    <property type="term" value="C:nucleus"/>
    <property type="evidence" value="ECO:0007005"/>
    <property type="project" value="PomBase"/>
</dbReference>
<dbReference type="GO" id="GO:0003723">
    <property type="term" value="F:RNA binding"/>
    <property type="evidence" value="ECO:0000318"/>
    <property type="project" value="GO_Central"/>
</dbReference>
<dbReference type="GO" id="GO:0045292">
    <property type="term" value="P:mRNA cis splicing, via spliceosome"/>
    <property type="evidence" value="ECO:0000250"/>
    <property type="project" value="PomBase"/>
</dbReference>
<dbReference type="InterPro" id="IPR011333">
    <property type="entry name" value="SKP1/BTB/POZ_sf"/>
</dbReference>
<dbReference type="SUPFAM" id="SSF54695">
    <property type="entry name" value="POZ domain"/>
    <property type="match status" value="1"/>
</dbReference>